<reference key="1">
    <citation type="journal article" date="1989" name="Gene">
        <title>Sequence analysis of the URA1 gene encoding orotidine-5'-monophosphate decarboxylase of Schizophyllum commune.</title>
        <authorList>
            <person name="Froeliger E.H."/>
            <person name="Ullrich R.C."/>
            <person name="Novotny C.P."/>
        </authorList>
    </citation>
    <scope>NUCLEOTIDE SEQUENCE [GENOMIC DNA]</scope>
</reference>
<evidence type="ECO:0000250" key="1"/>
<evidence type="ECO:0000255" key="2">
    <source>
        <dbReference type="PROSITE-ProRule" id="PRU10110"/>
    </source>
</evidence>
<evidence type="ECO:0000305" key="3"/>
<comment type="catalytic activity">
    <reaction evidence="2">
        <text>orotidine 5'-phosphate + H(+) = UMP + CO2</text>
        <dbReference type="Rhea" id="RHEA:11596"/>
        <dbReference type="ChEBI" id="CHEBI:15378"/>
        <dbReference type="ChEBI" id="CHEBI:16526"/>
        <dbReference type="ChEBI" id="CHEBI:57538"/>
        <dbReference type="ChEBI" id="CHEBI:57865"/>
        <dbReference type="EC" id="4.1.1.23"/>
    </reaction>
</comment>
<comment type="pathway">
    <text>Pyrimidine metabolism; UMP biosynthesis via de novo pathway; UMP from orotate: step 2/2.</text>
</comment>
<comment type="similarity">
    <text evidence="3">Belongs to the OMP decarboxylase family.</text>
</comment>
<dbReference type="EC" id="4.1.1.23"/>
<dbReference type="EMBL" id="M26019">
    <property type="protein sequence ID" value="AAA33928.1"/>
    <property type="molecule type" value="Genomic_DNA"/>
</dbReference>
<dbReference type="PIR" id="JQ0122">
    <property type="entry name" value="DCSJOS"/>
</dbReference>
<dbReference type="SMR" id="P14964"/>
<dbReference type="VEuPathDB" id="FungiDB:SCHCODRAFT_01036814"/>
<dbReference type="OMA" id="CLIKTHI"/>
<dbReference type="UniPathway" id="UPA00070">
    <property type="reaction ID" value="UER00120"/>
</dbReference>
<dbReference type="GO" id="GO:0004588">
    <property type="term" value="F:orotate phosphoribosyltransferase activity"/>
    <property type="evidence" value="ECO:0007669"/>
    <property type="project" value="TreeGrafter"/>
</dbReference>
<dbReference type="GO" id="GO:0004590">
    <property type="term" value="F:orotidine-5'-phosphate decarboxylase activity"/>
    <property type="evidence" value="ECO:0007669"/>
    <property type="project" value="UniProtKB-EC"/>
</dbReference>
<dbReference type="GO" id="GO:0006207">
    <property type="term" value="P:'de novo' pyrimidine nucleobase biosynthetic process"/>
    <property type="evidence" value="ECO:0007669"/>
    <property type="project" value="InterPro"/>
</dbReference>
<dbReference type="GO" id="GO:0044205">
    <property type="term" value="P:'de novo' UMP biosynthetic process"/>
    <property type="evidence" value="ECO:0007669"/>
    <property type="project" value="UniProtKB-UniPathway"/>
</dbReference>
<dbReference type="CDD" id="cd04725">
    <property type="entry name" value="OMP_decarboxylase_like"/>
    <property type="match status" value="1"/>
</dbReference>
<dbReference type="FunFam" id="3.20.20.70:FF:000114">
    <property type="entry name" value="Decarboxylase,orotidine phosphate"/>
    <property type="match status" value="1"/>
</dbReference>
<dbReference type="Gene3D" id="3.20.20.70">
    <property type="entry name" value="Aldolase class I"/>
    <property type="match status" value="1"/>
</dbReference>
<dbReference type="InterPro" id="IPR013785">
    <property type="entry name" value="Aldolase_TIM"/>
</dbReference>
<dbReference type="InterPro" id="IPR014732">
    <property type="entry name" value="OMPdecase"/>
</dbReference>
<dbReference type="InterPro" id="IPR018089">
    <property type="entry name" value="OMPdecase_AS"/>
</dbReference>
<dbReference type="InterPro" id="IPR001754">
    <property type="entry name" value="OMPdeCOase_dom"/>
</dbReference>
<dbReference type="InterPro" id="IPR011060">
    <property type="entry name" value="RibuloseP-bd_barrel"/>
</dbReference>
<dbReference type="NCBIfam" id="TIGR01740">
    <property type="entry name" value="pyrF"/>
    <property type="match status" value="1"/>
</dbReference>
<dbReference type="PANTHER" id="PTHR19278">
    <property type="entry name" value="OROTATE PHOSPHORIBOSYLTRANSFERASE"/>
    <property type="match status" value="1"/>
</dbReference>
<dbReference type="PANTHER" id="PTHR19278:SF9">
    <property type="entry name" value="URIDINE 5'-MONOPHOSPHATE SYNTHASE"/>
    <property type="match status" value="1"/>
</dbReference>
<dbReference type="Pfam" id="PF00215">
    <property type="entry name" value="OMPdecase"/>
    <property type="match status" value="1"/>
</dbReference>
<dbReference type="SMART" id="SM00934">
    <property type="entry name" value="OMPdecase"/>
    <property type="match status" value="1"/>
</dbReference>
<dbReference type="SUPFAM" id="SSF51366">
    <property type="entry name" value="Ribulose-phoshate binding barrel"/>
    <property type="match status" value="1"/>
</dbReference>
<dbReference type="PROSITE" id="PS00156">
    <property type="entry name" value="OMPDECASE"/>
    <property type="match status" value="1"/>
</dbReference>
<keyword id="KW-0210">Decarboxylase</keyword>
<keyword id="KW-0456">Lyase</keyword>
<keyword id="KW-0665">Pyrimidine biosynthesis</keyword>
<accession>P14964</accession>
<feature type="chain" id="PRO_0000134682" description="Orotidine 5'-phosphate decarboxylase">
    <location>
        <begin position="1"/>
        <end position="278"/>
    </location>
</feature>
<feature type="active site" description="Proton donor" evidence="2">
    <location>
        <position position="95"/>
    </location>
</feature>
<feature type="binding site" evidence="1">
    <location>
        <position position="40"/>
    </location>
    <ligand>
        <name>substrate</name>
    </ligand>
</feature>
<feature type="binding site" evidence="1">
    <location>
        <begin position="62"/>
        <end position="64"/>
    </location>
    <ligand>
        <name>substrate</name>
    </ligand>
</feature>
<feature type="binding site" evidence="1">
    <location>
        <begin position="93"/>
        <end position="102"/>
    </location>
    <ligand>
        <name>substrate</name>
    </ligand>
</feature>
<feature type="binding site" evidence="1">
    <location>
        <position position="223"/>
    </location>
    <ligand>
        <name>substrate</name>
    </ligand>
</feature>
<feature type="binding site" evidence="1">
    <location>
        <position position="242"/>
    </location>
    <ligand>
        <name>substrate</name>
    </ligand>
</feature>
<proteinExistence type="inferred from homology"/>
<sequence length="278" mass="29979">MTAAHKLTYGQRAARFTNPAAKALLETMERKKSNLSVSVDVVKSADLLAIVDTVGPYICLIKTHVDVVEDFDSSLVTKLQALAEKHDFLIFEDRKFADIGNTVALQYSSGVHKIASWSHITNAHPVPGPSIISGLASVGQPLGRGLLLLAEMSTKGSLATGAYTEAAVQMARENRGFVIGFIAQRRMDGIGAPPGVNVEDEDFLVLTPGVGLDVKGDGMGQQYRTPKQVVQEDGCDVIIVGRGIYGKDPSKVEEIRRQAERYQAAGWAAYIERVNALV</sequence>
<protein>
    <recommendedName>
        <fullName>Orotidine 5'-phosphate decarboxylase</fullName>
        <ecNumber>4.1.1.23</ecNumber>
    </recommendedName>
    <alternativeName>
        <fullName>OMP decarboxylase</fullName>
        <shortName>OMPDCase</shortName>
        <shortName>OMPdecase</shortName>
    </alternativeName>
    <alternativeName>
        <fullName>Uridine 5'-monophosphate synthase</fullName>
        <shortName>UMP synthase</shortName>
    </alternativeName>
</protein>
<gene>
    <name type="primary">URA1</name>
</gene>
<name>PYRF_SCHCO</name>
<organism>
    <name type="scientific">Schizophyllum commune</name>
    <name type="common">Split gill fungus</name>
    <dbReference type="NCBI Taxonomy" id="5334"/>
    <lineage>
        <taxon>Eukaryota</taxon>
        <taxon>Fungi</taxon>
        <taxon>Dikarya</taxon>
        <taxon>Basidiomycota</taxon>
        <taxon>Agaricomycotina</taxon>
        <taxon>Agaricomycetes</taxon>
        <taxon>Agaricomycetidae</taxon>
        <taxon>Agaricales</taxon>
        <taxon>Schizophyllaceae</taxon>
        <taxon>Schizophyllum</taxon>
    </lineage>
</organism>